<protein>
    <recommendedName>
        <fullName>Dicer-like protein 1</fullName>
    </recommendedName>
    <domain>
        <recommendedName>
            <fullName>Endoribonuclease dcl1</fullName>
            <ecNumber>3.1.26.-</ecNumber>
        </recommendedName>
    </domain>
    <domain>
        <recommendedName>
            <fullName>ATP-dependent helicase dcl1</fullName>
            <ecNumber>3.6.4.-</ecNumber>
        </recommendedName>
    </domain>
</protein>
<keyword id="KW-0051">Antiviral defense</keyword>
<keyword id="KW-0930">Antiviral protein</keyword>
<keyword id="KW-0067">ATP-binding</keyword>
<keyword id="KW-0347">Helicase</keyword>
<keyword id="KW-0378">Hydrolase</keyword>
<keyword id="KW-0460">Magnesium</keyword>
<keyword id="KW-0464">Manganese</keyword>
<keyword id="KW-0479">Metal-binding</keyword>
<keyword id="KW-0547">Nucleotide-binding</keyword>
<keyword id="KW-1185">Reference proteome</keyword>
<keyword id="KW-0677">Repeat</keyword>
<keyword id="KW-0694">RNA-binding</keyword>
<keyword id="KW-0862">Zinc</keyword>
<accession>A1DE13</accession>
<evidence type="ECO:0000250" key="1"/>
<evidence type="ECO:0000250" key="2">
    <source>
        <dbReference type="UniProtKB" id="Q09884"/>
    </source>
</evidence>
<evidence type="ECO:0000255" key="3">
    <source>
        <dbReference type="PROSITE-ProRule" id="PRU00142"/>
    </source>
</evidence>
<evidence type="ECO:0000255" key="4">
    <source>
        <dbReference type="PROSITE-ProRule" id="PRU00177"/>
    </source>
</evidence>
<evidence type="ECO:0000255" key="5">
    <source>
        <dbReference type="PROSITE-ProRule" id="PRU00541"/>
    </source>
</evidence>
<evidence type="ECO:0000255" key="6">
    <source>
        <dbReference type="PROSITE-ProRule" id="PRU00542"/>
    </source>
</evidence>
<evidence type="ECO:0000255" key="7">
    <source>
        <dbReference type="PROSITE-ProRule" id="PRU00657"/>
    </source>
</evidence>
<evidence type="ECO:0000256" key="8">
    <source>
        <dbReference type="SAM" id="MobiDB-lite"/>
    </source>
</evidence>
<sequence length="1538" mass="174902">MTEQISLVDVSSSVSLKGEDSSNVALLRDLFINDVAASDPAESSADVHKDEHSSDNSDNDNEAVPKPNDFSQRRRIQNAQFEALLSKRTDADSNEAIDRAPIALSDDELSIAHLVEKQDLGNGMLDPREYQIELFERAKTQNTIAVLDTGSGKTLIAVLLLRHTILNELDNRANGKPHRVSFFLVDSVTLAYQQAAVLRNNIDQNVAHFFGAMGTDLWDKRTWDEHLQRNMVIVCTAEILNQCLLNSYVKMDQINLLIFDEAHHAKKDHPYARIIRDSYFKAQPSQRPRVFGMTASPIDTKGDITEAATRLETLLDSRIATTSKITLLREVVSRPIEKVWAYNRLESPFATELYKLMDTRYGNIKVLEGVYRFAWHASSELGKWCSDRAWWHALADDVLPKLEGNISKLVESNTLNAEHGAVFKDIIRIREASETVKNYSFADPELPGELSPKVQLLRMELSKHFSDTTGTKCIVFTQKRYTAKILNELFTVLNIPHLRPGVLIGVRPGDIGGMNVTFRQQFLALVKFRTGEINCLFATSVAEEGLDIPDCNLVVRFDLYRTLIQYVQSRGRARHCTSTYAIMVEKDNAEHEGRLKEIREAEKIMQRFCETLPEDRILHGNDHDLDSLLQEEEGRRTFTVKSTGAKLTYHSAIAILARYASSLQYEKETVPQVTYVVGHVSNAYVCEVILPEKSPIRGLTGSPAIRKAVAKQSAAFDTCLLLRKHRLLDDYFNSIYHRRLPAMRNAKLAITCKRTNEYDMLLKPSIWAKQRTTPIDKLYGIHISLLPSKPLSRDHRPILLLTREKLPEFPAFSIYLDEDVETKVLSYPLKHGLQISVDELQSLTTFTLRIFRDIFHKVYEHEVQKMPYWLAPAKALDGPGSGTNPRDWTDWDTVSFVHNNDEIPFTRDLNPDSLVNRFIFDNWDGRFRYFTVAVADTLQPSDPPPPSVPRRRHMNNIMNYTLSLSKNSRARFFSGCDWNQPVLQAELVRLRRNLLDKMTTQEKEMQTECFICAEPLRISAIPTSIVSTCLAFPAIISRLDSYLIALEACDELELVIRPDFALEAFTKDSDNTEEHRGQQIHFQRGMGKNYERLEFLGDCFLKMATSIALYTQNPDDDEFDYHVNRMCLICNKNLFNTAIKKQIYRYIRSRGFSRHIWYPDGLTLLHGKDHSKKLLSEGKHALGEKTIADVCEALIGASLLSGGPENRFDMATKAVTALVDSPSHRVSCWKEYITLYTMPKYQTEKPRGSEDDLARHVEEELGYHFTYPRLLASAITHPSLPSTWGYRVPCYQRLEFLGDSLLDMVCVEDLFRRFPDRDPQWLTEHKMAMVSNKFLGALSVKLGFHRRIMAFSNPLQAQITHYVEEIESAQAESRGAVDYWVVAKDPPKCLPDMVEAYLGAIFVDSKFDFQVIEVFFERQIKPFFEDMSIYDTFANKHPTTFLHNKLTNEYGCTNYCLKAGELPTIDGAPAGVLAAVIVHGNVISEARSSSSRYAKVKASEKALAVLDGLLPFEFCQKYHCGCKETQNSSSAVEIGTAI</sequence>
<organism>
    <name type="scientific">Neosartorya fischeri (strain ATCC 1020 / DSM 3700 / CBS 544.65 / FGSC A1164 / JCM 1740 / NRRL 181 / WB 181)</name>
    <name type="common">Aspergillus fischerianus</name>
    <dbReference type="NCBI Taxonomy" id="331117"/>
    <lineage>
        <taxon>Eukaryota</taxon>
        <taxon>Fungi</taxon>
        <taxon>Dikarya</taxon>
        <taxon>Ascomycota</taxon>
        <taxon>Pezizomycotina</taxon>
        <taxon>Eurotiomycetes</taxon>
        <taxon>Eurotiomycetidae</taxon>
        <taxon>Eurotiales</taxon>
        <taxon>Aspergillaceae</taxon>
        <taxon>Aspergillus</taxon>
        <taxon>Aspergillus subgen. Fumigati</taxon>
    </lineage>
</organism>
<dbReference type="EC" id="3.1.26.-"/>
<dbReference type="EC" id="3.6.4.-"/>
<dbReference type="EMBL" id="DS027696">
    <property type="protein sequence ID" value="EAW17620.1"/>
    <property type="molecule type" value="Genomic_DNA"/>
</dbReference>
<dbReference type="RefSeq" id="XP_001259517.1">
    <property type="nucleotide sequence ID" value="XM_001259516.1"/>
</dbReference>
<dbReference type="SMR" id="A1DE13"/>
<dbReference type="STRING" id="331117.A1DE13"/>
<dbReference type="EnsemblFungi" id="EAW17620">
    <property type="protein sequence ID" value="EAW17620"/>
    <property type="gene ID" value="NFIA_075500"/>
</dbReference>
<dbReference type="GeneID" id="4586299"/>
<dbReference type="KEGG" id="nfi:NFIA_075500"/>
<dbReference type="VEuPathDB" id="FungiDB:NFIA_075500"/>
<dbReference type="eggNOG" id="KOG0701">
    <property type="taxonomic scope" value="Eukaryota"/>
</dbReference>
<dbReference type="HOGENOM" id="CLU_000907_4_3_1"/>
<dbReference type="OMA" id="YHVNRMC"/>
<dbReference type="OrthoDB" id="416741at2759"/>
<dbReference type="Proteomes" id="UP000006702">
    <property type="component" value="Unassembled WGS sequence"/>
</dbReference>
<dbReference type="GO" id="GO:0005737">
    <property type="term" value="C:cytoplasm"/>
    <property type="evidence" value="ECO:0007669"/>
    <property type="project" value="TreeGrafter"/>
</dbReference>
<dbReference type="GO" id="GO:0005634">
    <property type="term" value="C:nucleus"/>
    <property type="evidence" value="ECO:0007669"/>
    <property type="project" value="TreeGrafter"/>
</dbReference>
<dbReference type="GO" id="GO:0005524">
    <property type="term" value="F:ATP binding"/>
    <property type="evidence" value="ECO:0007669"/>
    <property type="project" value="UniProtKB-KW"/>
</dbReference>
<dbReference type="GO" id="GO:0003677">
    <property type="term" value="F:DNA binding"/>
    <property type="evidence" value="ECO:0007669"/>
    <property type="project" value="InterPro"/>
</dbReference>
<dbReference type="GO" id="GO:0004386">
    <property type="term" value="F:helicase activity"/>
    <property type="evidence" value="ECO:0007669"/>
    <property type="project" value="UniProtKB-KW"/>
</dbReference>
<dbReference type="GO" id="GO:0046872">
    <property type="term" value="F:metal ion binding"/>
    <property type="evidence" value="ECO:0007669"/>
    <property type="project" value="UniProtKB-KW"/>
</dbReference>
<dbReference type="GO" id="GO:0004525">
    <property type="term" value="F:ribonuclease III activity"/>
    <property type="evidence" value="ECO:0007669"/>
    <property type="project" value="InterPro"/>
</dbReference>
<dbReference type="GO" id="GO:0003723">
    <property type="term" value="F:RNA binding"/>
    <property type="evidence" value="ECO:0007669"/>
    <property type="project" value="UniProtKB-KW"/>
</dbReference>
<dbReference type="GO" id="GO:0051607">
    <property type="term" value="P:defense response to virus"/>
    <property type="evidence" value="ECO:0007669"/>
    <property type="project" value="UniProtKB-KW"/>
</dbReference>
<dbReference type="GO" id="GO:0050688">
    <property type="term" value="P:regulation of defense response to virus"/>
    <property type="evidence" value="ECO:0007669"/>
    <property type="project" value="UniProtKB-KW"/>
</dbReference>
<dbReference type="GO" id="GO:0030422">
    <property type="term" value="P:siRNA processing"/>
    <property type="evidence" value="ECO:0007669"/>
    <property type="project" value="TreeGrafter"/>
</dbReference>
<dbReference type="CDD" id="cd18034">
    <property type="entry name" value="DEXHc_dicer"/>
    <property type="match status" value="1"/>
</dbReference>
<dbReference type="CDD" id="cd00593">
    <property type="entry name" value="RIBOc"/>
    <property type="match status" value="2"/>
</dbReference>
<dbReference type="CDD" id="cd18802">
    <property type="entry name" value="SF2_C_dicer"/>
    <property type="match status" value="1"/>
</dbReference>
<dbReference type="FunFam" id="1.10.1520.10:FF:000015">
    <property type="entry name" value="Dicer-like protein 1"/>
    <property type="match status" value="1"/>
</dbReference>
<dbReference type="FunFam" id="1.10.1520.10:FF:000026">
    <property type="entry name" value="Dicer-like protein 1"/>
    <property type="match status" value="1"/>
</dbReference>
<dbReference type="FunFam" id="3.30.160.380:FF:000004">
    <property type="entry name" value="Dicer-like protein 1"/>
    <property type="match status" value="1"/>
</dbReference>
<dbReference type="FunFam" id="3.40.50.300:FF:001669">
    <property type="entry name" value="Dicer-like protein 1"/>
    <property type="match status" value="1"/>
</dbReference>
<dbReference type="FunFam" id="3.40.50.300:FF:001988">
    <property type="entry name" value="Dicer-like protein 1"/>
    <property type="match status" value="1"/>
</dbReference>
<dbReference type="Gene3D" id="3.30.160.380">
    <property type="entry name" value="Dicer dimerisation domain"/>
    <property type="match status" value="1"/>
</dbReference>
<dbReference type="Gene3D" id="3.40.50.300">
    <property type="entry name" value="P-loop containing nucleotide triphosphate hydrolases"/>
    <property type="match status" value="2"/>
</dbReference>
<dbReference type="Gene3D" id="1.10.1520.10">
    <property type="entry name" value="Ribonuclease III domain"/>
    <property type="match status" value="2"/>
</dbReference>
<dbReference type="InterPro" id="IPR038248">
    <property type="entry name" value="Dicer_dimer_sf"/>
</dbReference>
<dbReference type="InterPro" id="IPR005034">
    <property type="entry name" value="Dicer_dimerisation_dom"/>
</dbReference>
<dbReference type="InterPro" id="IPR056755">
    <property type="entry name" value="DSRM_2"/>
</dbReference>
<dbReference type="InterPro" id="IPR006935">
    <property type="entry name" value="Helicase/UvrB_N"/>
</dbReference>
<dbReference type="InterPro" id="IPR014001">
    <property type="entry name" value="Helicase_ATP-bd"/>
</dbReference>
<dbReference type="InterPro" id="IPR001650">
    <property type="entry name" value="Helicase_C-like"/>
</dbReference>
<dbReference type="InterPro" id="IPR027417">
    <property type="entry name" value="P-loop_NTPase"/>
</dbReference>
<dbReference type="InterPro" id="IPR003100">
    <property type="entry name" value="PAZ_dom"/>
</dbReference>
<dbReference type="InterPro" id="IPR000999">
    <property type="entry name" value="RNase_III_dom"/>
</dbReference>
<dbReference type="InterPro" id="IPR036389">
    <property type="entry name" value="RNase_III_sf"/>
</dbReference>
<dbReference type="PANTHER" id="PTHR14950:SF62">
    <property type="entry name" value="DICER-LIKE PROTEIN 1"/>
    <property type="match status" value="1"/>
</dbReference>
<dbReference type="PANTHER" id="PTHR14950">
    <property type="entry name" value="DICER-RELATED"/>
    <property type="match status" value="1"/>
</dbReference>
<dbReference type="Pfam" id="PF03368">
    <property type="entry name" value="Dicer_dimer"/>
    <property type="match status" value="1"/>
</dbReference>
<dbReference type="Pfam" id="PF24995">
    <property type="entry name" value="DSRM_2"/>
    <property type="match status" value="1"/>
</dbReference>
<dbReference type="Pfam" id="PF00271">
    <property type="entry name" value="Helicase_C"/>
    <property type="match status" value="1"/>
</dbReference>
<dbReference type="Pfam" id="PF04851">
    <property type="entry name" value="ResIII"/>
    <property type="match status" value="1"/>
</dbReference>
<dbReference type="Pfam" id="PF00636">
    <property type="entry name" value="Ribonuclease_3"/>
    <property type="match status" value="2"/>
</dbReference>
<dbReference type="SMART" id="SM00487">
    <property type="entry name" value="DEXDc"/>
    <property type="match status" value="1"/>
</dbReference>
<dbReference type="SMART" id="SM00490">
    <property type="entry name" value="HELICc"/>
    <property type="match status" value="1"/>
</dbReference>
<dbReference type="SMART" id="SM00535">
    <property type="entry name" value="RIBOc"/>
    <property type="match status" value="2"/>
</dbReference>
<dbReference type="SUPFAM" id="SSF52540">
    <property type="entry name" value="P-loop containing nucleoside triphosphate hydrolases"/>
    <property type="match status" value="1"/>
</dbReference>
<dbReference type="SUPFAM" id="SSF69065">
    <property type="entry name" value="RNase III domain-like"/>
    <property type="match status" value="2"/>
</dbReference>
<dbReference type="PROSITE" id="PS51327">
    <property type="entry name" value="DICER_DSRBF"/>
    <property type="match status" value="1"/>
</dbReference>
<dbReference type="PROSITE" id="PS51192">
    <property type="entry name" value="HELICASE_ATP_BIND_1"/>
    <property type="match status" value="1"/>
</dbReference>
<dbReference type="PROSITE" id="PS51194">
    <property type="entry name" value="HELICASE_CTER"/>
    <property type="match status" value="1"/>
</dbReference>
<dbReference type="PROSITE" id="PS50821">
    <property type="entry name" value="PAZ"/>
    <property type="match status" value="1"/>
</dbReference>
<dbReference type="PROSITE" id="PS00517">
    <property type="entry name" value="RNASE_3_1"/>
    <property type="match status" value="1"/>
</dbReference>
<dbReference type="PROSITE" id="PS50142">
    <property type="entry name" value="RNASE_3_2"/>
    <property type="match status" value="2"/>
</dbReference>
<feature type="chain" id="PRO_0000306782" description="Dicer-like protein 1">
    <location>
        <begin position="1"/>
        <end position="1538"/>
    </location>
</feature>
<feature type="domain" description="Helicase ATP-binding" evidence="5">
    <location>
        <begin position="134"/>
        <end position="315"/>
    </location>
</feature>
<feature type="domain" description="Helicase C-terminal" evidence="6">
    <location>
        <begin position="460"/>
        <end position="619"/>
    </location>
</feature>
<feature type="domain" description="Dicer dsRNA-binding fold" evidence="7">
    <location>
        <begin position="652"/>
        <end position="742"/>
    </location>
</feature>
<feature type="domain" description="PAZ" evidence="3">
    <location>
        <begin position="892"/>
        <end position="1020"/>
    </location>
</feature>
<feature type="domain" description="RNase III 1" evidence="4">
    <location>
        <begin position="1044"/>
        <end position="1203"/>
    </location>
</feature>
<feature type="domain" description="RNase III 2" evidence="4">
    <location>
        <begin position="1254"/>
        <end position="1406"/>
    </location>
</feature>
<feature type="domain" description="DRBM">
    <location>
        <begin position="1440"/>
        <end position="1508"/>
    </location>
</feature>
<feature type="region of interest" description="Disordered" evidence="8">
    <location>
        <begin position="39"/>
        <end position="72"/>
    </location>
</feature>
<feature type="short sequence motif" description="DEAH box">
    <location>
        <begin position="260"/>
        <end position="263"/>
    </location>
</feature>
<feature type="compositionally biased region" description="Basic and acidic residues" evidence="8">
    <location>
        <begin position="45"/>
        <end position="55"/>
    </location>
</feature>
<feature type="binding site" evidence="5">
    <location>
        <begin position="147"/>
        <end position="154"/>
    </location>
    <ligand>
        <name>ATP</name>
        <dbReference type="ChEBI" id="CHEBI:30616"/>
    </ligand>
</feature>
<feature type="binding site" evidence="1">
    <location>
        <position position="1295"/>
    </location>
    <ligand>
        <name>Mg(2+)</name>
        <dbReference type="ChEBI" id="CHEBI:18420"/>
    </ligand>
</feature>
<feature type="binding site" evidence="1">
    <location>
        <position position="1392"/>
    </location>
    <ligand>
        <name>Mg(2+)</name>
        <dbReference type="ChEBI" id="CHEBI:18420"/>
    </ligand>
</feature>
<feature type="binding site" evidence="1">
    <location>
        <position position="1395"/>
    </location>
    <ligand>
        <name>Mg(2+)</name>
        <dbReference type="ChEBI" id="CHEBI:18420"/>
    </ligand>
</feature>
<feature type="binding site" evidence="2">
    <location>
        <position position="1452"/>
    </location>
    <ligand>
        <name>Zn(2+)</name>
        <dbReference type="ChEBI" id="CHEBI:29105"/>
    </ligand>
</feature>
<feature type="binding site" evidence="2">
    <location>
        <position position="1479"/>
    </location>
    <ligand>
        <name>Zn(2+)</name>
        <dbReference type="ChEBI" id="CHEBI:29105"/>
    </ligand>
</feature>
<feature type="binding site" evidence="2">
    <location>
        <position position="1520"/>
    </location>
    <ligand>
        <name>Zn(2+)</name>
        <dbReference type="ChEBI" id="CHEBI:29105"/>
    </ligand>
</feature>
<feature type="binding site" evidence="2">
    <location>
        <position position="1522"/>
    </location>
    <ligand>
        <name>Zn(2+)</name>
        <dbReference type="ChEBI" id="CHEBI:29105"/>
    </ligand>
</feature>
<feature type="site" description="Important for activity" evidence="1">
    <location>
        <position position="1388"/>
    </location>
</feature>
<name>DCL1_NEOFI</name>
<comment type="function">
    <text evidence="1">Dicer-like endonuclease involved in cleaving double-stranded RNA in the RNA interference (RNAi) pathway. Produces 21 to 25 bp dsRNAs (siRNAs) which target the selective destruction of homologous RNAs leading to sequence-specific suppression of gene expression, called post-transcriptional gene silencing (PTGS). Part of a broad host defense response against viral infection and transposons (By similarity).</text>
</comment>
<comment type="cofactor">
    <cofactor evidence="1">
        <name>Mg(2+)</name>
        <dbReference type="ChEBI" id="CHEBI:18420"/>
    </cofactor>
    <cofactor evidence="1">
        <name>Mn(2+)</name>
        <dbReference type="ChEBI" id="CHEBI:29035"/>
    </cofactor>
</comment>
<comment type="similarity">
    <text evidence="7">Belongs to the helicase family. Dicer subfamily.</text>
</comment>
<gene>
    <name type="primary">dcl1</name>
    <name type="ORF">NFIA_075500</name>
</gene>
<proteinExistence type="inferred from homology"/>
<reference key="1">
    <citation type="journal article" date="2008" name="PLoS Genet.">
        <title>Genomic islands in the pathogenic filamentous fungus Aspergillus fumigatus.</title>
        <authorList>
            <person name="Fedorova N.D."/>
            <person name="Khaldi N."/>
            <person name="Joardar V.S."/>
            <person name="Maiti R."/>
            <person name="Amedeo P."/>
            <person name="Anderson M.J."/>
            <person name="Crabtree J."/>
            <person name="Silva J.C."/>
            <person name="Badger J.H."/>
            <person name="Albarraq A."/>
            <person name="Angiuoli S."/>
            <person name="Bussey H."/>
            <person name="Bowyer P."/>
            <person name="Cotty P.J."/>
            <person name="Dyer P.S."/>
            <person name="Egan A."/>
            <person name="Galens K."/>
            <person name="Fraser-Liggett C.M."/>
            <person name="Haas B.J."/>
            <person name="Inman J.M."/>
            <person name="Kent R."/>
            <person name="Lemieux S."/>
            <person name="Malavazi I."/>
            <person name="Orvis J."/>
            <person name="Roemer T."/>
            <person name="Ronning C.M."/>
            <person name="Sundaram J.P."/>
            <person name="Sutton G."/>
            <person name="Turner G."/>
            <person name="Venter J.C."/>
            <person name="White O.R."/>
            <person name="Whitty B.R."/>
            <person name="Youngman P."/>
            <person name="Wolfe K.H."/>
            <person name="Goldman G.H."/>
            <person name="Wortman J.R."/>
            <person name="Jiang B."/>
            <person name="Denning D.W."/>
            <person name="Nierman W.C."/>
        </authorList>
    </citation>
    <scope>NUCLEOTIDE SEQUENCE [LARGE SCALE GENOMIC DNA]</scope>
    <source>
        <strain>ATCC 1020 / DSM 3700 / CBS 544.65 / FGSC A1164 / JCM 1740 / NRRL 181 / WB 181</strain>
    </source>
</reference>